<sequence>MSKEKVARFNKQHFVVGLKETLKALKKDQVTSLIIAEDVEVYLMTRVLSQINQKNIPVSFFKSKHALGKHVGINVNATIVALIK</sequence>
<keyword id="KW-0694">RNA-binding</keyword>
<proteinExistence type="inferred from homology"/>
<dbReference type="EMBL" id="BA000017">
    <property type="protein sequence ID" value="BAB56706.1"/>
    <property type="molecule type" value="Genomic_DNA"/>
</dbReference>
<dbReference type="RefSeq" id="WP_000031892.1">
    <property type="nucleotide sequence ID" value="NC_002758.2"/>
</dbReference>
<dbReference type="SMR" id="P0A0G3"/>
<dbReference type="KEGG" id="sav:SAV0544"/>
<dbReference type="HOGENOM" id="CLU_168063_0_0_9"/>
<dbReference type="PhylomeDB" id="P0A0G3"/>
<dbReference type="Proteomes" id="UP000002481">
    <property type="component" value="Chromosome"/>
</dbReference>
<dbReference type="GO" id="GO:0003723">
    <property type="term" value="F:RNA binding"/>
    <property type="evidence" value="ECO:0007669"/>
    <property type="project" value="UniProtKB-UniRule"/>
</dbReference>
<dbReference type="Gene3D" id="3.30.1330.30">
    <property type="match status" value="1"/>
</dbReference>
<dbReference type="HAMAP" id="MF_00574">
    <property type="entry name" value="Ribosomal_eL8_Bact"/>
    <property type="match status" value="1"/>
</dbReference>
<dbReference type="InterPro" id="IPR029064">
    <property type="entry name" value="Ribosomal_eL30-like_sf"/>
</dbReference>
<dbReference type="InterPro" id="IPR004038">
    <property type="entry name" value="Ribosomal_eL8/eL30/eS12/Gad45"/>
</dbReference>
<dbReference type="InterPro" id="IPR023460">
    <property type="entry name" value="RNA_bf_YbxF-like"/>
</dbReference>
<dbReference type="NCBIfam" id="NF010123">
    <property type="entry name" value="PRK13600.1"/>
    <property type="match status" value="1"/>
</dbReference>
<dbReference type="Pfam" id="PF01248">
    <property type="entry name" value="Ribosomal_L7Ae"/>
    <property type="match status" value="1"/>
</dbReference>
<dbReference type="SUPFAM" id="SSF55315">
    <property type="entry name" value="L30e-like"/>
    <property type="match status" value="1"/>
</dbReference>
<accession>P0A0G3</accession>
<accession>Q53602</accession>
<accession>Q99W63</accession>
<evidence type="ECO:0000255" key="1">
    <source>
        <dbReference type="HAMAP-Rule" id="MF_00574"/>
    </source>
</evidence>
<evidence type="ECO:0000305" key="2"/>
<protein>
    <recommendedName>
        <fullName evidence="1">RNA-binding protein SAV0544</fullName>
    </recommendedName>
    <alternativeName>
        <fullName evidence="2">Putative ribosomal protein L7Ae-like</fullName>
    </alternativeName>
    <alternativeName>
        <fullName evidence="1">Ribosomal protein eL8-like</fullName>
    </alternativeName>
</protein>
<name>RXL7_STAAM</name>
<organism>
    <name type="scientific">Staphylococcus aureus (strain Mu50 / ATCC 700699)</name>
    <dbReference type="NCBI Taxonomy" id="158878"/>
    <lineage>
        <taxon>Bacteria</taxon>
        <taxon>Bacillati</taxon>
        <taxon>Bacillota</taxon>
        <taxon>Bacilli</taxon>
        <taxon>Bacillales</taxon>
        <taxon>Staphylococcaceae</taxon>
        <taxon>Staphylococcus</taxon>
    </lineage>
</organism>
<comment type="similarity">
    <text evidence="1">Belongs to the eukaryotic ribosomal protein eL8 family.</text>
</comment>
<gene>
    <name type="ordered locus">SAV0544</name>
</gene>
<feature type="chain" id="PRO_0000136816" description="RNA-binding protein SAV0544">
    <location>
        <begin position="1"/>
        <end position="84"/>
    </location>
</feature>
<reference key="1">
    <citation type="journal article" date="2001" name="Lancet">
        <title>Whole genome sequencing of meticillin-resistant Staphylococcus aureus.</title>
        <authorList>
            <person name="Kuroda M."/>
            <person name="Ohta T."/>
            <person name="Uchiyama I."/>
            <person name="Baba T."/>
            <person name="Yuzawa H."/>
            <person name="Kobayashi I."/>
            <person name="Cui L."/>
            <person name="Oguchi A."/>
            <person name="Aoki K."/>
            <person name="Nagai Y."/>
            <person name="Lian J.-Q."/>
            <person name="Ito T."/>
            <person name="Kanamori M."/>
            <person name="Matsumaru H."/>
            <person name="Maruyama A."/>
            <person name="Murakami H."/>
            <person name="Hosoyama A."/>
            <person name="Mizutani-Ui Y."/>
            <person name="Takahashi N.K."/>
            <person name="Sawano T."/>
            <person name="Inoue R."/>
            <person name="Kaito C."/>
            <person name="Sekimizu K."/>
            <person name="Hirakawa H."/>
            <person name="Kuhara S."/>
            <person name="Goto S."/>
            <person name="Yabuzaki J."/>
            <person name="Kanehisa M."/>
            <person name="Yamashita A."/>
            <person name="Oshima K."/>
            <person name="Furuya K."/>
            <person name="Yoshino C."/>
            <person name="Shiba T."/>
            <person name="Hattori M."/>
            <person name="Ogasawara N."/>
            <person name="Hayashi H."/>
            <person name="Hiramatsu K."/>
        </authorList>
    </citation>
    <scope>NUCLEOTIDE SEQUENCE [LARGE SCALE GENOMIC DNA]</scope>
    <source>
        <strain>Mu50 / ATCC 700699</strain>
    </source>
</reference>